<comment type="function">
    <text evidence="1">Specifically methylates position 2 of adenine 2503 in 23S rRNA and position 2 of adenine 37 in tRNAs.</text>
</comment>
<comment type="catalytic activity">
    <reaction evidence="1">
        <text>adenosine(2503) in 23S rRNA + 2 reduced [2Fe-2S]-[ferredoxin] + 2 S-adenosyl-L-methionine = 2-methyladenosine(2503) in 23S rRNA + 5'-deoxyadenosine + L-methionine + 2 oxidized [2Fe-2S]-[ferredoxin] + S-adenosyl-L-homocysteine</text>
        <dbReference type="Rhea" id="RHEA:42916"/>
        <dbReference type="Rhea" id="RHEA-COMP:10000"/>
        <dbReference type="Rhea" id="RHEA-COMP:10001"/>
        <dbReference type="Rhea" id="RHEA-COMP:10152"/>
        <dbReference type="Rhea" id="RHEA-COMP:10282"/>
        <dbReference type="ChEBI" id="CHEBI:17319"/>
        <dbReference type="ChEBI" id="CHEBI:33737"/>
        <dbReference type="ChEBI" id="CHEBI:33738"/>
        <dbReference type="ChEBI" id="CHEBI:57844"/>
        <dbReference type="ChEBI" id="CHEBI:57856"/>
        <dbReference type="ChEBI" id="CHEBI:59789"/>
        <dbReference type="ChEBI" id="CHEBI:74411"/>
        <dbReference type="ChEBI" id="CHEBI:74497"/>
        <dbReference type="EC" id="2.1.1.192"/>
    </reaction>
</comment>
<comment type="catalytic activity">
    <reaction evidence="1">
        <text>adenosine(37) in tRNA + 2 reduced [2Fe-2S]-[ferredoxin] + 2 S-adenosyl-L-methionine = 2-methyladenosine(37) in tRNA + 5'-deoxyadenosine + L-methionine + 2 oxidized [2Fe-2S]-[ferredoxin] + S-adenosyl-L-homocysteine</text>
        <dbReference type="Rhea" id="RHEA:43332"/>
        <dbReference type="Rhea" id="RHEA-COMP:10000"/>
        <dbReference type="Rhea" id="RHEA-COMP:10001"/>
        <dbReference type="Rhea" id="RHEA-COMP:10162"/>
        <dbReference type="Rhea" id="RHEA-COMP:10485"/>
        <dbReference type="ChEBI" id="CHEBI:17319"/>
        <dbReference type="ChEBI" id="CHEBI:33737"/>
        <dbReference type="ChEBI" id="CHEBI:33738"/>
        <dbReference type="ChEBI" id="CHEBI:57844"/>
        <dbReference type="ChEBI" id="CHEBI:57856"/>
        <dbReference type="ChEBI" id="CHEBI:59789"/>
        <dbReference type="ChEBI" id="CHEBI:74411"/>
        <dbReference type="ChEBI" id="CHEBI:74497"/>
        <dbReference type="EC" id="2.1.1.192"/>
    </reaction>
</comment>
<comment type="cofactor">
    <cofactor evidence="1">
        <name>[4Fe-4S] cluster</name>
        <dbReference type="ChEBI" id="CHEBI:49883"/>
    </cofactor>
    <text evidence="1">Binds 1 [4Fe-4S] cluster. The cluster is coordinated with 3 cysteines and an exchangeable S-adenosyl-L-methionine.</text>
</comment>
<comment type="subcellular location">
    <subcellularLocation>
        <location evidence="1">Cytoplasm</location>
    </subcellularLocation>
</comment>
<comment type="miscellaneous">
    <text evidence="1">Reaction proceeds by a ping-pong mechanism involving intermediate methylation of a conserved cysteine residue.</text>
</comment>
<comment type="similarity">
    <text evidence="1">Belongs to the radical SAM superfamily. RlmN family.</text>
</comment>
<gene>
    <name evidence="1" type="primary">rlmN</name>
    <name type="ordered locus">BALH_3495</name>
</gene>
<protein>
    <recommendedName>
        <fullName evidence="1">Probable dual-specificity RNA methyltransferase RlmN</fullName>
        <ecNumber evidence="1">2.1.1.192</ecNumber>
    </recommendedName>
    <alternativeName>
        <fullName evidence="1">23S rRNA (adenine(2503)-C(2))-methyltransferase</fullName>
    </alternativeName>
    <alternativeName>
        <fullName evidence="1">23S rRNA m2A2503 methyltransferase</fullName>
    </alternativeName>
    <alternativeName>
        <fullName evidence="1">Ribosomal RNA large subunit methyltransferase N</fullName>
    </alternativeName>
    <alternativeName>
        <fullName evidence="1">tRNA (adenine(37)-C(2))-methyltransferase</fullName>
    </alternativeName>
    <alternativeName>
        <fullName evidence="1">tRNA m2A37 methyltransferase</fullName>
    </alternativeName>
</protein>
<keyword id="KW-0004">4Fe-4S</keyword>
<keyword id="KW-0963">Cytoplasm</keyword>
<keyword id="KW-1015">Disulfide bond</keyword>
<keyword id="KW-0408">Iron</keyword>
<keyword id="KW-0411">Iron-sulfur</keyword>
<keyword id="KW-0479">Metal-binding</keyword>
<keyword id="KW-0489">Methyltransferase</keyword>
<keyword id="KW-0698">rRNA processing</keyword>
<keyword id="KW-0949">S-adenosyl-L-methionine</keyword>
<keyword id="KW-0808">Transferase</keyword>
<keyword id="KW-0819">tRNA processing</keyword>
<organism>
    <name type="scientific">Bacillus thuringiensis (strain Al Hakam)</name>
    <dbReference type="NCBI Taxonomy" id="412694"/>
    <lineage>
        <taxon>Bacteria</taxon>
        <taxon>Bacillati</taxon>
        <taxon>Bacillota</taxon>
        <taxon>Bacilli</taxon>
        <taxon>Bacillales</taxon>
        <taxon>Bacillaceae</taxon>
        <taxon>Bacillus</taxon>
        <taxon>Bacillus cereus group</taxon>
    </lineage>
</organism>
<feature type="chain" id="PRO_0000350037" description="Probable dual-specificity RNA methyltransferase RlmN">
    <location>
        <begin position="1"/>
        <end position="362"/>
    </location>
</feature>
<feature type="domain" description="Radical SAM core" evidence="2">
    <location>
        <begin position="111"/>
        <end position="344"/>
    </location>
</feature>
<feature type="active site" description="Proton acceptor" evidence="1">
    <location>
        <position position="105"/>
    </location>
</feature>
<feature type="active site" description="S-methylcysteine intermediate" evidence="1">
    <location>
        <position position="349"/>
    </location>
</feature>
<feature type="binding site" evidence="1">
    <location>
        <position position="125"/>
    </location>
    <ligand>
        <name>[4Fe-4S] cluster</name>
        <dbReference type="ChEBI" id="CHEBI:49883"/>
        <note>4Fe-4S-S-AdoMet</note>
    </ligand>
</feature>
<feature type="binding site" evidence="1">
    <location>
        <position position="129"/>
    </location>
    <ligand>
        <name>[4Fe-4S] cluster</name>
        <dbReference type="ChEBI" id="CHEBI:49883"/>
        <note>4Fe-4S-S-AdoMet</note>
    </ligand>
</feature>
<feature type="binding site" evidence="1">
    <location>
        <position position="132"/>
    </location>
    <ligand>
        <name>[4Fe-4S] cluster</name>
        <dbReference type="ChEBI" id="CHEBI:49883"/>
        <note>4Fe-4S-S-AdoMet</note>
    </ligand>
</feature>
<feature type="binding site" evidence="1">
    <location>
        <begin position="175"/>
        <end position="176"/>
    </location>
    <ligand>
        <name>S-adenosyl-L-methionine</name>
        <dbReference type="ChEBI" id="CHEBI:59789"/>
    </ligand>
</feature>
<feature type="binding site" evidence="1">
    <location>
        <position position="207"/>
    </location>
    <ligand>
        <name>S-adenosyl-L-methionine</name>
        <dbReference type="ChEBI" id="CHEBI:59789"/>
    </ligand>
</feature>
<feature type="binding site" evidence="1">
    <location>
        <begin position="230"/>
        <end position="232"/>
    </location>
    <ligand>
        <name>S-adenosyl-L-methionine</name>
        <dbReference type="ChEBI" id="CHEBI:59789"/>
    </ligand>
</feature>
<feature type="binding site" evidence="1">
    <location>
        <position position="306"/>
    </location>
    <ligand>
        <name>S-adenosyl-L-methionine</name>
        <dbReference type="ChEBI" id="CHEBI:59789"/>
    </ligand>
</feature>
<feature type="disulfide bond" description="(transient)" evidence="1">
    <location>
        <begin position="118"/>
        <end position="349"/>
    </location>
</feature>
<name>RLMN_BACAH</name>
<accession>A0RHN7</accession>
<sequence>METTVRKQKKNLETKKPSIYSLQLHEMQDWLKEQGEPKFRAGQIFDWLYKKRVKNYEDMSNLSKGLREKLSNSFDITTLNTLVKQTSSDGTIKFLFQLYDGYSIETVLMRHEYGNSICVTTQVGCRIGCTFCASTLGGLKRNLEAGEIVAQVVEVQRALDESEERVSSLVVMGIGEPFDNYDNLMGFLRIINHEKGLHIGARHMTVSTSGIIPKIYKFAEEDLQINFAISLHAPNSELRSKLMPINRAYKLPDLMEAIKYYVNRTGRRITFEYGLFGGENDQVEHAEELAALLKGVKCHVNLIPVNYVPERDYVRTPREQIFLFEKTLKDRGVNVTIRREQGHDIDAACGQLRAKERKEETR</sequence>
<evidence type="ECO:0000255" key="1">
    <source>
        <dbReference type="HAMAP-Rule" id="MF_01849"/>
    </source>
</evidence>
<evidence type="ECO:0000255" key="2">
    <source>
        <dbReference type="PROSITE-ProRule" id="PRU01266"/>
    </source>
</evidence>
<reference key="1">
    <citation type="journal article" date="2007" name="J. Bacteriol.">
        <title>The complete genome sequence of Bacillus thuringiensis Al Hakam.</title>
        <authorList>
            <person name="Challacombe J.F."/>
            <person name="Altherr M.R."/>
            <person name="Xie G."/>
            <person name="Bhotika S.S."/>
            <person name="Brown N."/>
            <person name="Bruce D."/>
            <person name="Campbell C.S."/>
            <person name="Campbell M.L."/>
            <person name="Chen J."/>
            <person name="Chertkov O."/>
            <person name="Cleland C."/>
            <person name="Dimitrijevic M."/>
            <person name="Doggett N.A."/>
            <person name="Fawcett J.J."/>
            <person name="Glavina T."/>
            <person name="Goodwin L.A."/>
            <person name="Green L.D."/>
            <person name="Han C.S."/>
            <person name="Hill K.K."/>
            <person name="Hitchcock P."/>
            <person name="Jackson P.J."/>
            <person name="Keim P."/>
            <person name="Kewalramani A.R."/>
            <person name="Longmire J."/>
            <person name="Lucas S."/>
            <person name="Malfatti S."/>
            <person name="Martinez D."/>
            <person name="McMurry K."/>
            <person name="Meincke L.J."/>
            <person name="Misra M."/>
            <person name="Moseman B.L."/>
            <person name="Mundt M."/>
            <person name="Munk A.C."/>
            <person name="Okinaka R.T."/>
            <person name="Parson-Quintana B."/>
            <person name="Reilly L.P."/>
            <person name="Richardson P."/>
            <person name="Robinson D.L."/>
            <person name="Saunders E."/>
            <person name="Tapia R."/>
            <person name="Tesmer J.G."/>
            <person name="Thayer N."/>
            <person name="Thompson L.S."/>
            <person name="Tice H."/>
            <person name="Ticknor L.O."/>
            <person name="Wills P.L."/>
            <person name="Gilna P."/>
            <person name="Brettin T.S."/>
        </authorList>
    </citation>
    <scope>NUCLEOTIDE SEQUENCE [LARGE SCALE GENOMIC DNA]</scope>
    <source>
        <strain>Al Hakam</strain>
    </source>
</reference>
<proteinExistence type="inferred from homology"/>
<dbReference type="EC" id="2.1.1.192" evidence="1"/>
<dbReference type="EMBL" id="CP000485">
    <property type="protein sequence ID" value="ABK86730.1"/>
    <property type="molecule type" value="Genomic_DNA"/>
</dbReference>
<dbReference type="RefSeq" id="WP_000450543.1">
    <property type="nucleotide sequence ID" value="NC_008600.1"/>
</dbReference>
<dbReference type="SMR" id="A0RHN7"/>
<dbReference type="GeneID" id="75087000"/>
<dbReference type="KEGG" id="btl:BALH_3495"/>
<dbReference type="HOGENOM" id="CLU_029101_0_1_9"/>
<dbReference type="GO" id="GO:0005737">
    <property type="term" value="C:cytoplasm"/>
    <property type="evidence" value="ECO:0007669"/>
    <property type="project" value="UniProtKB-SubCell"/>
</dbReference>
<dbReference type="GO" id="GO:0051539">
    <property type="term" value="F:4 iron, 4 sulfur cluster binding"/>
    <property type="evidence" value="ECO:0007669"/>
    <property type="project" value="UniProtKB-UniRule"/>
</dbReference>
<dbReference type="GO" id="GO:0046872">
    <property type="term" value="F:metal ion binding"/>
    <property type="evidence" value="ECO:0007669"/>
    <property type="project" value="UniProtKB-KW"/>
</dbReference>
<dbReference type="GO" id="GO:0070040">
    <property type="term" value="F:rRNA (adenine(2503)-C2-)-methyltransferase activity"/>
    <property type="evidence" value="ECO:0007669"/>
    <property type="project" value="UniProtKB-UniRule"/>
</dbReference>
<dbReference type="GO" id="GO:0019843">
    <property type="term" value="F:rRNA binding"/>
    <property type="evidence" value="ECO:0007669"/>
    <property type="project" value="UniProtKB-UniRule"/>
</dbReference>
<dbReference type="GO" id="GO:0002935">
    <property type="term" value="F:tRNA (adenine(37)-C2)-methyltransferase activity"/>
    <property type="evidence" value="ECO:0007669"/>
    <property type="project" value="UniProtKB-UniRule"/>
</dbReference>
<dbReference type="GO" id="GO:0000049">
    <property type="term" value="F:tRNA binding"/>
    <property type="evidence" value="ECO:0007669"/>
    <property type="project" value="UniProtKB-UniRule"/>
</dbReference>
<dbReference type="GO" id="GO:0070475">
    <property type="term" value="P:rRNA base methylation"/>
    <property type="evidence" value="ECO:0007669"/>
    <property type="project" value="UniProtKB-UniRule"/>
</dbReference>
<dbReference type="GO" id="GO:0030488">
    <property type="term" value="P:tRNA methylation"/>
    <property type="evidence" value="ECO:0007669"/>
    <property type="project" value="UniProtKB-UniRule"/>
</dbReference>
<dbReference type="CDD" id="cd01335">
    <property type="entry name" value="Radical_SAM"/>
    <property type="match status" value="1"/>
</dbReference>
<dbReference type="FunFam" id="1.10.150.530:FF:000002">
    <property type="entry name" value="Probable dual-specificity RNA methyltransferase RlmN"/>
    <property type="match status" value="1"/>
</dbReference>
<dbReference type="FunFam" id="3.20.20.70:FF:000014">
    <property type="entry name" value="Probable dual-specificity RNA methyltransferase RlmN"/>
    <property type="match status" value="1"/>
</dbReference>
<dbReference type="Gene3D" id="1.10.150.530">
    <property type="match status" value="1"/>
</dbReference>
<dbReference type="Gene3D" id="3.20.20.70">
    <property type="entry name" value="Aldolase class I"/>
    <property type="match status" value="1"/>
</dbReference>
<dbReference type="HAMAP" id="MF_01849">
    <property type="entry name" value="RNA_methyltr_RlmN"/>
    <property type="match status" value="1"/>
</dbReference>
<dbReference type="InterPro" id="IPR013785">
    <property type="entry name" value="Aldolase_TIM"/>
</dbReference>
<dbReference type="InterPro" id="IPR040072">
    <property type="entry name" value="Methyltransferase_A"/>
</dbReference>
<dbReference type="InterPro" id="IPR048641">
    <property type="entry name" value="RlmN_N"/>
</dbReference>
<dbReference type="InterPro" id="IPR027492">
    <property type="entry name" value="RNA_MTrfase_RlmN"/>
</dbReference>
<dbReference type="InterPro" id="IPR004383">
    <property type="entry name" value="rRNA_lsu_MTrfase_RlmN/Cfr"/>
</dbReference>
<dbReference type="InterPro" id="IPR007197">
    <property type="entry name" value="rSAM"/>
</dbReference>
<dbReference type="NCBIfam" id="TIGR00048">
    <property type="entry name" value="rRNA_mod_RlmN"/>
    <property type="match status" value="1"/>
</dbReference>
<dbReference type="PANTHER" id="PTHR30544">
    <property type="entry name" value="23S RRNA METHYLTRANSFERASE"/>
    <property type="match status" value="1"/>
</dbReference>
<dbReference type="PANTHER" id="PTHR30544:SF5">
    <property type="entry name" value="RADICAL SAM CORE DOMAIN-CONTAINING PROTEIN"/>
    <property type="match status" value="1"/>
</dbReference>
<dbReference type="Pfam" id="PF04055">
    <property type="entry name" value="Radical_SAM"/>
    <property type="match status" value="1"/>
</dbReference>
<dbReference type="Pfam" id="PF21016">
    <property type="entry name" value="RlmN_N"/>
    <property type="match status" value="1"/>
</dbReference>
<dbReference type="PIRSF" id="PIRSF006004">
    <property type="entry name" value="CHP00048"/>
    <property type="match status" value="1"/>
</dbReference>
<dbReference type="SFLD" id="SFLDF00275">
    <property type="entry name" value="adenosine_C2_methyltransferase"/>
    <property type="match status" value="1"/>
</dbReference>
<dbReference type="SFLD" id="SFLDS00029">
    <property type="entry name" value="Radical_SAM"/>
    <property type="match status" value="1"/>
</dbReference>
<dbReference type="SUPFAM" id="SSF102114">
    <property type="entry name" value="Radical SAM enzymes"/>
    <property type="match status" value="1"/>
</dbReference>
<dbReference type="PROSITE" id="PS51918">
    <property type="entry name" value="RADICAL_SAM"/>
    <property type="match status" value="1"/>
</dbReference>